<reference key="1">
    <citation type="journal article" date="2004" name="J. Mol. Evol.">
        <title>Comparative analysis of the complete plastid genome sequence of the red alga Gracilaria tenuistipitata var. liui provides insights into the evolution of rhodoplasts and their relationship to other plastids.</title>
        <authorList>
            <person name="Hagopian J.C."/>
            <person name="Reis M."/>
            <person name="Kitajima J.P."/>
            <person name="Bhattacharya D."/>
            <person name="de Oliveira M.C."/>
        </authorList>
    </citation>
    <scope>NUCLEOTIDE SEQUENCE [LARGE SCALE GENOMIC DNA]</scope>
</reference>
<gene>
    <name evidence="1" type="primary">gpmI</name>
    <name type="ordered locus">Grc000189</name>
</gene>
<sequence length="510" mass="57674">MKSIILTILDGWGYSENKKGNAIQIADTPTIDKLWNSYPNTLLNASGRDVGLPEGQMGNSEVGHTTIGAGRIINQDLVRISKSIEDRSFFNNEAINSICQKINFYNTKLHLIGLCSNGGVHSHIKHLFALLDIAMRYKIQICIHAITDGRDTSPYGSKIFIEEINNQIQQFNHINICTISGRYYSMDRDCRWARTEKSYNTLLKNTLGFTKDPILMINEYYKKNISDEFIPPTRLHKGSIENNDGIIFFNFRPDRMRQLVHAFTKSTFKGFNTTSFHNLEILTLTQYDPSLDIEVAFPAKKNKNFIGEIIAKYGLKQLRLAETEKYAHVTYFFNGGIEEPFAGEDRQLIPSPKVETYDLDPEMSATKLTESAINAINKNTYKFIVINYANPDMVGHTGNLDATIHAIQKIDKCIKKIWLACQAMNSTLIITSDHGNADYMLDENNEPCTSHSTNPVPFILAEPTNIHTYHLRKNGNLADIAPTILQLLNLNIPNEMNGISLLETKAKNKI</sequence>
<geneLocation type="chloroplast"/>
<proteinExistence type="inferred from homology"/>
<evidence type="ECO:0000255" key="1">
    <source>
        <dbReference type="HAMAP-Rule" id="MF_01038"/>
    </source>
</evidence>
<feature type="chain" id="PRO_0000212245" description="2,3-bisphosphoglycerate-independent phosphoglycerate mutase">
    <location>
        <begin position="1"/>
        <end position="510"/>
    </location>
</feature>
<feature type="active site" description="Phosphoserine intermediate" evidence="1">
    <location>
        <position position="60"/>
    </location>
</feature>
<feature type="binding site" evidence="1">
    <location>
        <position position="10"/>
    </location>
    <ligand>
        <name>Mn(2+)</name>
        <dbReference type="ChEBI" id="CHEBI:29035"/>
        <label>2</label>
    </ligand>
</feature>
<feature type="binding site" evidence="1">
    <location>
        <position position="60"/>
    </location>
    <ligand>
        <name>Mn(2+)</name>
        <dbReference type="ChEBI" id="CHEBI:29035"/>
        <label>2</label>
    </ligand>
</feature>
<feature type="binding site" evidence="1">
    <location>
        <position position="121"/>
    </location>
    <ligand>
        <name>substrate</name>
    </ligand>
</feature>
<feature type="binding site" evidence="1">
    <location>
        <begin position="150"/>
        <end position="151"/>
    </location>
    <ligand>
        <name>substrate</name>
    </ligand>
</feature>
<feature type="binding site" evidence="1">
    <location>
        <position position="182"/>
    </location>
    <ligand>
        <name>substrate</name>
    </ligand>
</feature>
<feature type="binding site" evidence="1">
    <location>
        <position position="188"/>
    </location>
    <ligand>
        <name>substrate</name>
    </ligand>
</feature>
<feature type="binding site" evidence="1">
    <location>
        <begin position="252"/>
        <end position="255"/>
    </location>
    <ligand>
        <name>substrate</name>
    </ligand>
</feature>
<feature type="binding site" evidence="1">
    <location>
        <position position="325"/>
    </location>
    <ligand>
        <name>substrate</name>
    </ligand>
</feature>
<feature type="binding site" evidence="1">
    <location>
        <position position="392"/>
    </location>
    <ligand>
        <name>Mn(2+)</name>
        <dbReference type="ChEBI" id="CHEBI:29035"/>
        <label>1</label>
    </ligand>
</feature>
<feature type="binding site" evidence="1">
    <location>
        <position position="396"/>
    </location>
    <ligand>
        <name>Mn(2+)</name>
        <dbReference type="ChEBI" id="CHEBI:29035"/>
        <label>1</label>
    </ligand>
</feature>
<feature type="binding site" evidence="1">
    <location>
        <position position="433"/>
    </location>
    <ligand>
        <name>Mn(2+)</name>
        <dbReference type="ChEBI" id="CHEBI:29035"/>
        <label>2</label>
    </ligand>
</feature>
<feature type="binding site" evidence="1">
    <location>
        <position position="434"/>
    </location>
    <ligand>
        <name>Mn(2+)</name>
        <dbReference type="ChEBI" id="CHEBI:29035"/>
        <label>2</label>
    </ligand>
</feature>
<feature type="binding site" evidence="1">
    <location>
        <position position="451"/>
    </location>
    <ligand>
        <name>Mn(2+)</name>
        <dbReference type="ChEBI" id="CHEBI:29035"/>
        <label>1</label>
    </ligand>
</feature>
<keyword id="KW-0150">Chloroplast</keyword>
<keyword id="KW-0324">Glycolysis</keyword>
<keyword id="KW-0413">Isomerase</keyword>
<keyword id="KW-0464">Manganese</keyword>
<keyword id="KW-0479">Metal-binding</keyword>
<keyword id="KW-0934">Plastid</keyword>
<protein>
    <recommendedName>
        <fullName evidence="1">2,3-bisphosphoglycerate-independent phosphoglycerate mutase</fullName>
        <shortName evidence="1">BPG-independent PGAM</shortName>
        <shortName evidence="1">Phosphoglyceromutase</shortName>
        <shortName evidence="1">iPGM</shortName>
        <ecNumber evidence="1">5.4.2.12</ecNumber>
    </recommendedName>
</protein>
<organism>
    <name type="scientific">Gracilaria tenuistipitata var. liui</name>
    <name type="common">Red alga</name>
    <dbReference type="NCBI Taxonomy" id="285951"/>
    <lineage>
        <taxon>Eukaryota</taxon>
        <taxon>Rhodophyta</taxon>
        <taxon>Florideophyceae</taxon>
        <taxon>Rhodymeniophycidae</taxon>
        <taxon>Gracilariales</taxon>
        <taxon>Gracilariaceae</taxon>
        <taxon>Gracilaria</taxon>
        <taxon>Gracilaria tenuistipitata</taxon>
    </lineage>
</organism>
<dbReference type="EC" id="5.4.2.12" evidence="1"/>
<dbReference type="EMBL" id="AY673996">
    <property type="protein sequence ID" value="AAT79770.1"/>
    <property type="molecule type" value="Genomic_DNA"/>
</dbReference>
<dbReference type="SMR" id="Q6B8L5"/>
<dbReference type="UniPathway" id="UPA00109">
    <property type="reaction ID" value="UER00186"/>
</dbReference>
<dbReference type="GO" id="GO:0009507">
    <property type="term" value="C:chloroplast"/>
    <property type="evidence" value="ECO:0007669"/>
    <property type="project" value="UniProtKB-SubCell"/>
</dbReference>
<dbReference type="GO" id="GO:0005829">
    <property type="term" value="C:cytosol"/>
    <property type="evidence" value="ECO:0007669"/>
    <property type="project" value="TreeGrafter"/>
</dbReference>
<dbReference type="GO" id="GO:0030145">
    <property type="term" value="F:manganese ion binding"/>
    <property type="evidence" value="ECO:0007669"/>
    <property type="project" value="UniProtKB-UniRule"/>
</dbReference>
<dbReference type="GO" id="GO:0004619">
    <property type="term" value="F:phosphoglycerate mutase activity"/>
    <property type="evidence" value="ECO:0007669"/>
    <property type="project" value="UniProtKB-EC"/>
</dbReference>
<dbReference type="GO" id="GO:0006007">
    <property type="term" value="P:glucose catabolic process"/>
    <property type="evidence" value="ECO:0007669"/>
    <property type="project" value="InterPro"/>
</dbReference>
<dbReference type="GO" id="GO:0006096">
    <property type="term" value="P:glycolytic process"/>
    <property type="evidence" value="ECO:0007669"/>
    <property type="project" value="UniProtKB-UniRule"/>
</dbReference>
<dbReference type="CDD" id="cd16010">
    <property type="entry name" value="iPGM"/>
    <property type="match status" value="1"/>
</dbReference>
<dbReference type="FunFam" id="3.40.1450.10:FF:000002">
    <property type="entry name" value="2,3-bisphosphoglycerate-independent phosphoglycerate mutase"/>
    <property type="match status" value="1"/>
</dbReference>
<dbReference type="Gene3D" id="3.40.720.10">
    <property type="entry name" value="Alkaline Phosphatase, subunit A"/>
    <property type="match status" value="1"/>
</dbReference>
<dbReference type="Gene3D" id="3.40.1450.10">
    <property type="entry name" value="BPG-independent phosphoglycerate mutase, domain B"/>
    <property type="match status" value="1"/>
</dbReference>
<dbReference type="HAMAP" id="MF_01038">
    <property type="entry name" value="GpmI"/>
    <property type="match status" value="1"/>
</dbReference>
<dbReference type="InterPro" id="IPR017850">
    <property type="entry name" value="Alkaline_phosphatase_core_sf"/>
</dbReference>
<dbReference type="InterPro" id="IPR011258">
    <property type="entry name" value="BPG-indep_PGM_N"/>
</dbReference>
<dbReference type="InterPro" id="IPR006124">
    <property type="entry name" value="Metalloenzyme"/>
</dbReference>
<dbReference type="InterPro" id="IPR036646">
    <property type="entry name" value="PGAM_B_sf"/>
</dbReference>
<dbReference type="InterPro" id="IPR005995">
    <property type="entry name" value="Pgm_bpd_ind"/>
</dbReference>
<dbReference type="NCBIfam" id="TIGR01307">
    <property type="entry name" value="pgm_bpd_ind"/>
    <property type="match status" value="1"/>
</dbReference>
<dbReference type="PANTHER" id="PTHR31637">
    <property type="entry name" value="2,3-BISPHOSPHOGLYCERATE-INDEPENDENT PHOSPHOGLYCERATE MUTASE"/>
    <property type="match status" value="1"/>
</dbReference>
<dbReference type="PANTHER" id="PTHR31637:SF0">
    <property type="entry name" value="2,3-BISPHOSPHOGLYCERATE-INDEPENDENT PHOSPHOGLYCERATE MUTASE"/>
    <property type="match status" value="1"/>
</dbReference>
<dbReference type="Pfam" id="PF06415">
    <property type="entry name" value="iPGM_N"/>
    <property type="match status" value="1"/>
</dbReference>
<dbReference type="Pfam" id="PF01676">
    <property type="entry name" value="Metalloenzyme"/>
    <property type="match status" value="1"/>
</dbReference>
<dbReference type="PIRSF" id="PIRSF001492">
    <property type="entry name" value="IPGAM"/>
    <property type="match status" value="1"/>
</dbReference>
<dbReference type="SUPFAM" id="SSF64158">
    <property type="entry name" value="2,3-Bisphosphoglycerate-independent phosphoglycerate mutase, substrate-binding domain"/>
    <property type="match status" value="1"/>
</dbReference>
<dbReference type="SUPFAM" id="SSF53649">
    <property type="entry name" value="Alkaline phosphatase-like"/>
    <property type="match status" value="1"/>
</dbReference>
<comment type="function">
    <text evidence="1">Catalyzes the interconversion of 2-phosphoglycerate and 3-phosphoglycerate.</text>
</comment>
<comment type="catalytic activity">
    <reaction evidence="1">
        <text>(2R)-2-phosphoglycerate = (2R)-3-phosphoglycerate</text>
        <dbReference type="Rhea" id="RHEA:15901"/>
        <dbReference type="ChEBI" id="CHEBI:58272"/>
        <dbReference type="ChEBI" id="CHEBI:58289"/>
        <dbReference type="EC" id="5.4.2.12"/>
    </reaction>
</comment>
<comment type="cofactor">
    <cofactor evidence="1">
        <name>Mn(2+)</name>
        <dbReference type="ChEBI" id="CHEBI:29035"/>
    </cofactor>
    <text evidence="1">Binds 2 manganese ions per subunit.</text>
</comment>
<comment type="pathway">
    <text evidence="1">Carbohydrate degradation; glycolysis; pyruvate from D-glyceraldehyde 3-phosphate: step 3/5.</text>
</comment>
<comment type="subcellular location">
    <subcellularLocation>
        <location>Plastid</location>
        <location>Chloroplast</location>
    </subcellularLocation>
</comment>
<comment type="similarity">
    <text evidence="1">Belongs to the BPG-independent phosphoglycerate mutase family.</text>
</comment>
<accession>Q6B8L5</accession>
<name>GPMI_GRATL</name>